<dbReference type="EC" id="4.1.3.39" evidence="1"/>
<dbReference type="EMBL" id="CP000509">
    <property type="protein sequence ID" value="ABL81658.1"/>
    <property type="molecule type" value="Genomic_DNA"/>
</dbReference>
<dbReference type="SMR" id="A1SIM3"/>
<dbReference type="STRING" id="196162.Noca_2149"/>
<dbReference type="KEGG" id="nca:Noca_2149"/>
<dbReference type="eggNOG" id="COG0119">
    <property type="taxonomic scope" value="Bacteria"/>
</dbReference>
<dbReference type="HOGENOM" id="CLU_049173_0_0_11"/>
<dbReference type="OrthoDB" id="9803573at2"/>
<dbReference type="Proteomes" id="UP000000640">
    <property type="component" value="Chromosome"/>
</dbReference>
<dbReference type="GO" id="GO:0003852">
    <property type="term" value="F:2-isopropylmalate synthase activity"/>
    <property type="evidence" value="ECO:0007669"/>
    <property type="project" value="TreeGrafter"/>
</dbReference>
<dbReference type="GO" id="GO:0008701">
    <property type="term" value="F:4-hydroxy-2-oxovalerate aldolase activity"/>
    <property type="evidence" value="ECO:0007669"/>
    <property type="project" value="UniProtKB-UniRule"/>
</dbReference>
<dbReference type="GO" id="GO:0030145">
    <property type="term" value="F:manganese ion binding"/>
    <property type="evidence" value="ECO:0007669"/>
    <property type="project" value="UniProtKB-UniRule"/>
</dbReference>
<dbReference type="GO" id="GO:0009056">
    <property type="term" value="P:catabolic process"/>
    <property type="evidence" value="ECO:0007669"/>
    <property type="project" value="UniProtKB-KW"/>
</dbReference>
<dbReference type="GO" id="GO:0009098">
    <property type="term" value="P:L-leucine biosynthetic process"/>
    <property type="evidence" value="ECO:0007669"/>
    <property type="project" value="TreeGrafter"/>
</dbReference>
<dbReference type="CDD" id="cd07943">
    <property type="entry name" value="DRE_TIM_HOA"/>
    <property type="match status" value="1"/>
</dbReference>
<dbReference type="Gene3D" id="1.10.8.60">
    <property type="match status" value="1"/>
</dbReference>
<dbReference type="Gene3D" id="3.20.20.70">
    <property type="entry name" value="Aldolase class I"/>
    <property type="match status" value="1"/>
</dbReference>
<dbReference type="HAMAP" id="MF_01656">
    <property type="entry name" value="HOA"/>
    <property type="match status" value="1"/>
</dbReference>
<dbReference type="InterPro" id="IPR050073">
    <property type="entry name" value="2-IPM_HCS-like"/>
</dbReference>
<dbReference type="InterPro" id="IPR017629">
    <property type="entry name" value="4OH_2_O-val_aldolase"/>
</dbReference>
<dbReference type="InterPro" id="IPR013785">
    <property type="entry name" value="Aldolase_TIM"/>
</dbReference>
<dbReference type="InterPro" id="IPR012425">
    <property type="entry name" value="DmpG_comm"/>
</dbReference>
<dbReference type="InterPro" id="IPR035685">
    <property type="entry name" value="DRE_TIM_HOA"/>
</dbReference>
<dbReference type="InterPro" id="IPR000891">
    <property type="entry name" value="PYR_CT"/>
</dbReference>
<dbReference type="NCBIfam" id="TIGR03217">
    <property type="entry name" value="4OH_2_O_val_ald"/>
    <property type="match status" value="1"/>
</dbReference>
<dbReference type="NCBIfam" id="NF006049">
    <property type="entry name" value="PRK08195.1"/>
    <property type="match status" value="1"/>
</dbReference>
<dbReference type="PANTHER" id="PTHR10277:SF9">
    <property type="entry name" value="2-ISOPROPYLMALATE SYNTHASE 1, CHLOROPLASTIC-RELATED"/>
    <property type="match status" value="1"/>
</dbReference>
<dbReference type="PANTHER" id="PTHR10277">
    <property type="entry name" value="HOMOCITRATE SYNTHASE-RELATED"/>
    <property type="match status" value="1"/>
</dbReference>
<dbReference type="Pfam" id="PF07836">
    <property type="entry name" value="DmpG_comm"/>
    <property type="match status" value="1"/>
</dbReference>
<dbReference type="Pfam" id="PF00682">
    <property type="entry name" value="HMGL-like"/>
    <property type="match status" value="1"/>
</dbReference>
<dbReference type="SUPFAM" id="SSF51569">
    <property type="entry name" value="Aldolase"/>
    <property type="match status" value="1"/>
</dbReference>
<dbReference type="SUPFAM" id="SSF89000">
    <property type="entry name" value="post-HMGL domain-like"/>
    <property type="match status" value="1"/>
</dbReference>
<dbReference type="PROSITE" id="PS50991">
    <property type="entry name" value="PYR_CT"/>
    <property type="match status" value="1"/>
</dbReference>
<protein>
    <recommendedName>
        <fullName evidence="1">4-hydroxy-2-oxovalerate aldolase 2</fullName>
        <shortName evidence="1">HOA 2</shortName>
        <ecNumber evidence="1">4.1.3.39</ecNumber>
    </recommendedName>
    <alternativeName>
        <fullName evidence="1">4-hydroxy-2-keto-pentanoic acid aldolase 2</fullName>
    </alternativeName>
    <alternativeName>
        <fullName evidence="1">4-hydroxy-2-oxopentanoate aldolase 2</fullName>
    </alternativeName>
</protein>
<organism>
    <name type="scientific">Nocardioides sp. (strain ATCC BAA-499 / JS614)</name>
    <dbReference type="NCBI Taxonomy" id="196162"/>
    <lineage>
        <taxon>Bacteria</taxon>
        <taxon>Bacillati</taxon>
        <taxon>Actinomycetota</taxon>
        <taxon>Actinomycetes</taxon>
        <taxon>Propionibacteriales</taxon>
        <taxon>Nocardioidaceae</taxon>
        <taxon>Nocardioides</taxon>
    </lineage>
</organism>
<proteinExistence type="inferred from homology"/>
<keyword id="KW-0058">Aromatic hydrocarbons catabolism</keyword>
<keyword id="KW-0456">Lyase</keyword>
<keyword id="KW-0464">Manganese</keyword>
<keyword id="KW-0479">Metal-binding</keyword>
<keyword id="KW-1185">Reference proteome</keyword>
<comment type="catalytic activity">
    <reaction evidence="1">
        <text>(S)-4-hydroxy-2-oxopentanoate = acetaldehyde + pyruvate</text>
        <dbReference type="Rhea" id="RHEA:22624"/>
        <dbReference type="ChEBI" id="CHEBI:15343"/>
        <dbReference type="ChEBI" id="CHEBI:15361"/>
        <dbReference type="ChEBI" id="CHEBI:73143"/>
        <dbReference type="EC" id="4.1.3.39"/>
    </reaction>
</comment>
<comment type="similarity">
    <text evidence="1">Belongs to the 4-hydroxy-2-oxovalerate aldolase family.</text>
</comment>
<name>HOA2_NOCSJ</name>
<reference key="1">
    <citation type="submission" date="2006-12" db="EMBL/GenBank/DDBJ databases">
        <title>Complete sequence of chromosome 1 of Nocardioides sp. JS614.</title>
        <authorList>
            <person name="Copeland A."/>
            <person name="Lucas S."/>
            <person name="Lapidus A."/>
            <person name="Barry K."/>
            <person name="Detter J.C."/>
            <person name="Glavina del Rio T."/>
            <person name="Hammon N."/>
            <person name="Israni S."/>
            <person name="Dalin E."/>
            <person name="Tice H."/>
            <person name="Pitluck S."/>
            <person name="Thompson L.S."/>
            <person name="Brettin T."/>
            <person name="Bruce D."/>
            <person name="Han C."/>
            <person name="Tapia R."/>
            <person name="Schmutz J."/>
            <person name="Larimer F."/>
            <person name="Land M."/>
            <person name="Hauser L."/>
            <person name="Kyrpides N."/>
            <person name="Kim E."/>
            <person name="Mattes T."/>
            <person name="Gossett J."/>
            <person name="Richardson P."/>
        </authorList>
    </citation>
    <scope>NUCLEOTIDE SEQUENCE [LARGE SCALE GENOMIC DNA]</scope>
    <source>
        <strain>ATCC BAA-499 / JS614</strain>
    </source>
</reference>
<evidence type="ECO:0000255" key="1">
    <source>
        <dbReference type="HAMAP-Rule" id="MF_01656"/>
    </source>
</evidence>
<sequence>MNETRTTVFVQDVTLRDGMHAIRHQLAPGEVAQIAAALDVAGVDAIEISHGDGLAGSSLNYGPGSHTDWEWIEAAAANIQRARLTTLLLPGIGTVDELRKAHDLGVRSVRVATHCTEADVSAQHIETARDLGMDVAGFLMMSHMAAASELAAQAALMESYGAHCVYVTDSGGRLTMDAVRDRVRAYRDVLDATTEIGIHAHENLSLSVANSVVAVEAGVTRVDASLAGQGAGAGNCPIEAFVAVANILGWQHGCDLYQLQDAAEDLVRPLQDRPVRVDRETLTLGYAGVYSSFLRHAEKAAQTYDLDVRTILTEVGNRRLVGGQEDMIVDIAMELSEVAADR</sequence>
<gene>
    <name type="ordered locus">Noca_2149</name>
</gene>
<accession>A1SIM3</accession>
<feature type="chain" id="PRO_0000387873" description="4-hydroxy-2-oxovalerate aldolase 2">
    <location>
        <begin position="1"/>
        <end position="342"/>
    </location>
</feature>
<feature type="domain" description="Pyruvate carboxyltransferase" evidence="1">
    <location>
        <begin position="8"/>
        <end position="260"/>
    </location>
</feature>
<feature type="active site" description="Proton acceptor" evidence="1">
    <location>
        <position position="20"/>
    </location>
</feature>
<feature type="binding site" evidence="1">
    <location>
        <begin position="16"/>
        <end position="17"/>
    </location>
    <ligand>
        <name>substrate</name>
    </ligand>
</feature>
<feature type="binding site" evidence="1">
    <location>
        <position position="17"/>
    </location>
    <ligand>
        <name>Mn(2+)</name>
        <dbReference type="ChEBI" id="CHEBI:29035"/>
    </ligand>
</feature>
<feature type="binding site" evidence="1">
    <location>
        <position position="170"/>
    </location>
    <ligand>
        <name>substrate</name>
    </ligand>
</feature>
<feature type="binding site" evidence="1">
    <location>
        <position position="199"/>
    </location>
    <ligand>
        <name>Mn(2+)</name>
        <dbReference type="ChEBI" id="CHEBI:29035"/>
    </ligand>
</feature>
<feature type="binding site" evidence="1">
    <location>
        <position position="199"/>
    </location>
    <ligand>
        <name>substrate</name>
    </ligand>
</feature>
<feature type="binding site" evidence="1">
    <location>
        <position position="201"/>
    </location>
    <ligand>
        <name>Mn(2+)</name>
        <dbReference type="ChEBI" id="CHEBI:29035"/>
    </ligand>
</feature>
<feature type="binding site" evidence="1">
    <location>
        <position position="290"/>
    </location>
    <ligand>
        <name>substrate</name>
    </ligand>
</feature>
<feature type="site" description="Transition state stabilizer" evidence="1">
    <location>
        <position position="16"/>
    </location>
</feature>